<dbReference type="EMBL" id="AL513382">
    <property type="protein sequence ID" value="CAD02481.1"/>
    <property type="molecule type" value="Genomic_DNA"/>
</dbReference>
<dbReference type="EMBL" id="AE014613">
    <property type="protein sequence ID" value="AAO68447.1"/>
    <property type="molecule type" value="Genomic_DNA"/>
</dbReference>
<dbReference type="RefSeq" id="NP_456664.1">
    <property type="nucleotide sequence ID" value="NC_003198.1"/>
</dbReference>
<dbReference type="RefSeq" id="WP_000978074.1">
    <property type="nucleotide sequence ID" value="NZ_WSUR01000002.1"/>
</dbReference>
<dbReference type="SMR" id="Q8Z5G4"/>
<dbReference type="STRING" id="220341.gene:17586236"/>
<dbReference type="KEGG" id="stt:t0754"/>
<dbReference type="KEGG" id="sty:STY2331"/>
<dbReference type="PATRIC" id="fig|220341.7.peg.2352"/>
<dbReference type="eggNOG" id="COG1596">
    <property type="taxonomic scope" value="Bacteria"/>
</dbReference>
<dbReference type="HOGENOM" id="CLU_038343_4_2_6"/>
<dbReference type="OMA" id="GCTIIPG"/>
<dbReference type="UniPathway" id="UPA00631"/>
<dbReference type="Proteomes" id="UP000000541">
    <property type="component" value="Chromosome"/>
</dbReference>
<dbReference type="Proteomes" id="UP000002670">
    <property type="component" value="Chromosome"/>
</dbReference>
<dbReference type="GO" id="GO:0009279">
    <property type="term" value="C:cell outer membrane"/>
    <property type="evidence" value="ECO:0007669"/>
    <property type="project" value="UniProtKB-SubCell"/>
</dbReference>
<dbReference type="GO" id="GO:0046930">
    <property type="term" value="C:pore complex"/>
    <property type="evidence" value="ECO:0007669"/>
    <property type="project" value="UniProtKB-KW"/>
</dbReference>
<dbReference type="GO" id="GO:0015159">
    <property type="term" value="F:polysaccharide transmembrane transporter activity"/>
    <property type="evidence" value="ECO:0007669"/>
    <property type="project" value="InterPro"/>
</dbReference>
<dbReference type="GO" id="GO:0015288">
    <property type="term" value="F:porin activity"/>
    <property type="evidence" value="ECO:0007669"/>
    <property type="project" value="UniProtKB-KW"/>
</dbReference>
<dbReference type="GO" id="GO:0006811">
    <property type="term" value="P:monoatomic ion transport"/>
    <property type="evidence" value="ECO:0007669"/>
    <property type="project" value="UniProtKB-KW"/>
</dbReference>
<dbReference type="GO" id="GO:0000271">
    <property type="term" value="P:polysaccharide biosynthetic process"/>
    <property type="evidence" value="ECO:0007669"/>
    <property type="project" value="UniProtKB-KW"/>
</dbReference>
<dbReference type="Gene3D" id="1.20.5.70">
    <property type="match status" value="1"/>
</dbReference>
<dbReference type="Gene3D" id="3.10.560.10">
    <property type="entry name" value="Outer membrane lipoprotein wza domain like"/>
    <property type="match status" value="2"/>
</dbReference>
<dbReference type="Gene3D" id="3.30.1950.10">
    <property type="entry name" value="wza like domain"/>
    <property type="match status" value="1"/>
</dbReference>
<dbReference type="InterPro" id="IPR049712">
    <property type="entry name" value="Poly_export"/>
</dbReference>
<dbReference type="InterPro" id="IPR003715">
    <property type="entry name" value="Poly_export_N"/>
</dbReference>
<dbReference type="InterPro" id="IPR054765">
    <property type="entry name" value="SLBB_dom"/>
</dbReference>
<dbReference type="InterPro" id="IPR040716">
    <property type="entry name" value="Wza_C"/>
</dbReference>
<dbReference type="NCBIfam" id="NF011658">
    <property type="entry name" value="PRK15078.1"/>
    <property type="match status" value="1"/>
</dbReference>
<dbReference type="PANTHER" id="PTHR33619">
    <property type="entry name" value="POLYSACCHARIDE EXPORT PROTEIN GFCE-RELATED"/>
    <property type="match status" value="1"/>
</dbReference>
<dbReference type="PANTHER" id="PTHR33619:SF3">
    <property type="entry name" value="POLYSACCHARIDE EXPORT PROTEIN GFCE-RELATED"/>
    <property type="match status" value="1"/>
</dbReference>
<dbReference type="Pfam" id="PF02563">
    <property type="entry name" value="Poly_export"/>
    <property type="match status" value="1"/>
</dbReference>
<dbReference type="Pfam" id="PF22461">
    <property type="entry name" value="SLBB_2"/>
    <property type="match status" value="2"/>
</dbReference>
<dbReference type="Pfam" id="PF18412">
    <property type="entry name" value="Wza_C"/>
    <property type="match status" value="1"/>
</dbReference>
<dbReference type="PROSITE" id="PS51257">
    <property type="entry name" value="PROKAR_LIPOPROTEIN"/>
    <property type="match status" value="1"/>
</dbReference>
<evidence type="ECO:0000250" key="1"/>
<evidence type="ECO:0000255" key="2">
    <source>
        <dbReference type="PROSITE-ProRule" id="PRU00303"/>
    </source>
</evidence>
<evidence type="ECO:0000305" key="3"/>
<protein>
    <recommendedName>
        <fullName>Putative polysaccharide export protein wza</fullName>
    </recommendedName>
</protein>
<keyword id="KW-0998">Cell outer membrane</keyword>
<keyword id="KW-0270">Exopolysaccharide synthesis</keyword>
<keyword id="KW-0406">Ion transport</keyword>
<keyword id="KW-0449">Lipoprotein</keyword>
<keyword id="KW-0472">Membrane</keyword>
<keyword id="KW-0564">Palmitate</keyword>
<keyword id="KW-0625">Polysaccharide transport</keyword>
<keyword id="KW-0626">Porin</keyword>
<keyword id="KW-0732">Signal</keyword>
<keyword id="KW-0762">Sugar transport</keyword>
<keyword id="KW-0812">Transmembrane</keyword>
<keyword id="KW-1134">Transmembrane beta strand</keyword>
<keyword id="KW-0813">Transport</keyword>
<comment type="function">
    <text evidence="1">Probably involved in the export of the extracellular polysaccharide colanic acid from the cell to medium.</text>
</comment>
<comment type="pathway">
    <text>Glycan metabolism; exopolysaccharide biosynthesis.</text>
</comment>
<comment type="subcellular location">
    <subcellularLocation>
        <location evidence="1">Cell outer membrane</location>
        <topology evidence="1">Multi-pass membrane protein</topology>
    </subcellularLocation>
</comment>
<comment type="similarity">
    <text evidence="3">Belongs to the BexD/CtrA/VexA family.</text>
</comment>
<proteinExistence type="inferred from homology"/>
<sequence>MMKSKMKLMPLLASLSLISGCTVLPGSNMSTMGKDVIKQQDADFDLDRMVNVYPLTPRLVEQLRPRPNVAQPNMSLDQEIASYQYRVGPGDVLNVTVWDHPELTTPAGQYRSSSDTGNWAQPDGTMFYPYIGKVSVVGKTLSEIRSDITGRLAKYIADPQVDVNIAAFRSQKAYISGQVNKSGQQAITNVPLTVLDAINAAGGLTDMADWRNVVLTHNGKEQRISLQALMQNGDLSQNRLLYPGDILYVPRNDDLKVFVMGEVKKQSTLKMDFSSMTLTEALGNAEGIDLTTSNASGIFVIRPLKGEGGRGGKIANIYQLDMSDATSLVMATEFRLQPYDVVYVTTAPVARWNRLINQLLPTISGVRYMTDTASDIHSW</sequence>
<reference key="1">
    <citation type="journal article" date="2001" name="Nature">
        <title>Complete genome sequence of a multiple drug resistant Salmonella enterica serovar Typhi CT18.</title>
        <authorList>
            <person name="Parkhill J."/>
            <person name="Dougan G."/>
            <person name="James K.D."/>
            <person name="Thomson N.R."/>
            <person name="Pickard D."/>
            <person name="Wain J."/>
            <person name="Churcher C.M."/>
            <person name="Mungall K.L."/>
            <person name="Bentley S.D."/>
            <person name="Holden M.T.G."/>
            <person name="Sebaihia M."/>
            <person name="Baker S."/>
            <person name="Basham D."/>
            <person name="Brooks K."/>
            <person name="Chillingworth T."/>
            <person name="Connerton P."/>
            <person name="Cronin A."/>
            <person name="Davis P."/>
            <person name="Davies R.M."/>
            <person name="Dowd L."/>
            <person name="White N."/>
            <person name="Farrar J."/>
            <person name="Feltwell T."/>
            <person name="Hamlin N."/>
            <person name="Haque A."/>
            <person name="Hien T.T."/>
            <person name="Holroyd S."/>
            <person name="Jagels K."/>
            <person name="Krogh A."/>
            <person name="Larsen T.S."/>
            <person name="Leather S."/>
            <person name="Moule S."/>
            <person name="O'Gaora P."/>
            <person name="Parry C."/>
            <person name="Quail M.A."/>
            <person name="Rutherford K.M."/>
            <person name="Simmonds M."/>
            <person name="Skelton J."/>
            <person name="Stevens K."/>
            <person name="Whitehead S."/>
            <person name="Barrell B.G."/>
        </authorList>
    </citation>
    <scope>NUCLEOTIDE SEQUENCE [LARGE SCALE GENOMIC DNA]</scope>
    <source>
        <strain>CT18</strain>
    </source>
</reference>
<reference key="2">
    <citation type="journal article" date="2003" name="J. Bacteriol.">
        <title>Comparative genomics of Salmonella enterica serovar Typhi strains Ty2 and CT18.</title>
        <authorList>
            <person name="Deng W."/>
            <person name="Liou S.-R."/>
            <person name="Plunkett G. III"/>
            <person name="Mayhew G.F."/>
            <person name="Rose D.J."/>
            <person name="Burland V."/>
            <person name="Kodoyianni V."/>
            <person name="Schwartz D.C."/>
            <person name="Blattner F.R."/>
        </authorList>
    </citation>
    <scope>NUCLEOTIDE SEQUENCE [LARGE SCALE GENOMIC DNA]</scope>
    <source>
        <strain>ATCC 700931 / Ty2</strain>
    </source>
</reference>
<organism>
    <name type="scientific">Salmonella typhi</name>
    <dbReference type="NCBI Taxonomy" id="90370"/>
    <lineage>
        <taxon>Bacteria</taxon>
        <taxon>Pseudomonadati</taxon>
        <taxon>Pseudomonadota</taxon>
        <taxon>Gammaproteobacteria</taxon>
        <taxon>Enterobacterales</taxon>
        <taxon>Enterobacteriaceae</taxon>
        <taxon>Salmonella</taxon>
    </lineage>
</organism>
<accession>Q8Z5G4</accession>
<gene>
    <name type="primary">wza</name>
    <name type="ordered locus">STY2331</name>
    <name type="ordered locus">t0754</name>
</gene>
<feature type="signal peptide" evidence="2">
    <location>
        <begin position="1"/>
        <end position="20"/>
    </location>
</feature>
<feature type="chain" id="PRO_0000025224" description="Putative polysaccharide export protein wza">
    <location>
        <begin position="21"/>
        <end position="379"/>
    </location>
</feature>
<feature type="lipid moiety-binding region" description="N-palmitoyl cysteine" evidence="2">
    <location>
        <position position="21"/>
    </location>
</feature>
<feature type="lipid moiety-binding region" description="S-diacylglycerol cysteine" evidence="2">
    <location>
        <position position="21"/>
    </location>
</feature>
<name>WZA_SALTI</name>